<keyword id="KW-0963">Cytoplasm</keyword>
<keyword id="KW-0489">Methyltransferase</keyword>
<keyword id="KW-1185">Reference proteome</keyword>
<keyword id="KW-0698">rRNA processing</keyword>
<keyword id="KW-0949">S-adenosyl-L-methionine</keyword>
<keyword id="KW-0808">Transferase</keyword>
<name>RSME_DICD3</name>
<gene>
    <name type="primary">rsmE</name>
    <name type="ordered locus">Dda3937_00423</name>
</gene>
<proteinExistence type="inferred from homology"/>
<dbReference type="EC" id="2.1.1.193"/>
<dbReference type="EMBL" id="CP002038">
    <property type="protein sequence ID" value="ADN00153.1"/>
    <property type="molecule type" value="Genomic_DNA"/>
</dbReference>
<dbReference type="EMBL" id="X73255">
    <property type="protein sequence ID" value="CAA51714.1"/>
    <property type="molecule type" value="Genomic_DNA"/>
</dbReference>
<dbReference type="PIR" id="S42743">
    <property type="entry name" value="S42743"/>
</dbReference>
<dbReference type="RefSeq" id="WP_013319572.1">
    <property type="nucleotide sequence ID" value="NC_014500.1"/>
</dbReference>
<dbReference type="SMR" id="P37995"/>
<dbReference type="STRING" id="198628.Dda3937_00423"/>
<dbReference type="KEGG" id="ddd:Dda3937_00423"/>
<dbReference type="PATRIC" id="fig|198628.6.peg.3895"/>
<dbReference type="eggNOG" id="COG1385">
    <property type="taxonomic scope" value="Bacteria"/>
</dbReference>
<dbReference type="HOGENOM" id="CLU_067442_5_1_6"/>
<dbReference type="OrthoDB" id="9815641at2"/>
<dbReference type="Proteomes" id="UP000006859">
    <property type="component" value="Chromosome"/>
</dbReference>
<dbReference type="GO" id="GO:0005737">
    <property type="term" value="C:cytoplasm"/>
    <property type="evidence" value="ECO:0007669"/>
    <property type="project" value="UniProtKB-SubCell"/>
</dbReference>
<dbReference type="GO" id="GO:0070042">
    <property type="term" value="F:rRNA (uridine-N3-)-methyltransferase activity"/>
    <property type="evidence" value="ECO:0007669"/>
    <property type="project" value="TreeGrafter"/>
</dbReference>
<dbReference type="GO" id="GO:0070475">
    <property type="term" value="P:rRNA base methylation"/>
    <property type="evidence" value="ECO:0007669"/>
    <property type="project" value="TreeGrafter"/>
</dbReference>
<dbReference type="CDD" id="cd18084">
    <property type="entry name" value="RsmE-like"/>
    <property type="match status" value="1"/>
</dbReference>
<dbReference type="FunFam" id="3.40.1280.10:FF:000007">
    <property type="entry name" value="Ribosomal RNA small subunit methyltransferase E"/>
    <property type="match status" value="1"/>
</dbReference>
<dbReference type="Gene3D" id="3.40.1280.10">
    <property type="match status" value="1"/>
</dbReference>
<dbReference type="Gene3D" id="2.40.240.20">
    <property type="entry name" value="Hypothetical PUA domain-like, domain 1"/>
    <property type="match status" value="1"/>
</dbReference>
<dbReference type="InterPro" id="IPR029028">
    <property type="entry name" value="Alpha/beta_knot_MTases"/>
</dbReference>
<dbReference type="InterPro" id="IPR015947">
    <property type="entry name" value="PUA-like_sf"/>
</dbReference>
<dbReference type="InterPro" id="IPR006700">
    <property type="entry name" value="RsmE"/>
</dbReference>
<dbReference type="InterPro" id="IPR046886">
    <property type="entry name" value="RsmE_MTase_dom"/>
</dbReference>
<dbReference type="InterPro" id="IPR046887">
    <property type="entry name" value="RsmE_PUA-like"/>
</dbReference>
<dbReference type="InterPro" id="IPR029026">
    <property type="entry name" value="tRNA_m1G_MTases_N"/>
</dbReference>
<dbReference type="NCBIfam" id="NF008690">
    <property type="entry name" value="PRK11713.1-1"/>
    <property type="match status" value="1"/>
</dbReference>
<dbReference type="NCBIfam" id="NF008692">
    <property type="entry name" value="PRK11713.1-5"/>
    <property type="match status" value="1"/>
</dbReference>
<dbReference type="NCBIfam" id="TIGR00046">
    <property type="entry name" value="RsmE family RNA methyltransferase"/>
    <property type="match status" value="1"/>
</dbReference>
<dbReference type="PANTHER" id="PTHR30027:SF3">
    <property type="entry name" value="16S RRNA (URACIL(1498)-N(3))-METHYLTRANSFERASE"/>
    <property type="match status" value="1"/>
</dbReference>
<dbReference type="PANTHER" id="PTHR30027">
    <property type="entry name" value="RIBOSOMAL RNA SMALL SUBUNIT METHYLTRANSFERASE E"/>
    <property type="match status" value="1"/>
</dbReference>
<dbReference type="Pfam" id="PF04452">
    <property type="entry name" value="Methyltrans_RNA"/>
    <property type="match status" value="1"/>
</dbReference>
<dbReference type="Pfam" id="PF20260">
    <property type="entry name" value="PUA_4"/>
    <property type="match status" value="1"/>
</dbReference>
<dbReference type="PIRSF" id="PIRSF015601">
    <property type="entry name" value="MTase_slr0722"/>
    <property type="match status" value="1"/>
</dbReference>
<dbReference type="SUPFAM" id="SSF75217">
    <property type="entry name" value="alpha/beta knot"/>
    <property type="match status" value="1"/>
</dbReference>
<dbReference type="SUPFAM" id="SSF88697">
    <property type="entry name" value="PUA domain-like"/>
    <property type="match status" value="1"/>
</dbReference>
<protein>
    <recommendedName>
        <fullName>Ribosomal RNA small subunit methyltransferase E</fullName>
        <ecNumber>2.1.1.193</ecNumber>
    </recommendedName>
    <alternativeName>
        <fullName>16S rRNA m3U1498 methyltransferase</fullName>
    </alternativeName>
</protein>
<comment type="function">
    <text evidence="1">Specifically methylates the N3 position of the uracil ring of uridine 1498 (m3U1498) in 16S rRNA. Acts on the fully assembled 30S ribosomal subunit (By similarity).</text>
</comment>
<comment type="catalytic activity">
    <reaction>
        <text>uridine(1498) in 16S rRNA + S-adenosyl-L-methionine = N(3)-methyluridine(1498) in 16S rRNA + S-adenosyl-L-homocysteine + H(+)</text>
        <dbReference type="Rhea" id="RHEA:42920"/>
        <dbReference type="Rhea" id="RHEA-COMP:10283"/>
        <dbReference type="Rhea" id="RHEA-COMP:10284"/>
        <dbReference type="ChEBI" id="CHEBI:15378"/>
        <dbReference type="ChEBI" id="CHEBI:57856"/>
        <dbReference type="ChEBI" id="CHEBI:59789"/>
        <dbReference type="ChEBI" id="CHEBI:65315"/>
        <dbReference type="ChEBI" id="CHEBI:74502"/>
        <dbReference type="EC" id="2.1.1.193"/>
    </reaction>
</comment>
<comment type="subunit">
    <text evidence="1">Homodimer.</text>
</comment>
<comment type="subcellular location">
    <subcellularLocation>
        <location evidence="1">Cytoplasm</location>
    </subcellularLocation>
</comment>
<comment type="similarity">
    <text evidence="3">Belongs to the RNA methyltransferase RsmE family.</text>
</comment>
<accession>P37995</accession>
<accession>E0SH60</accession>
<feature type="chain" id="PRO_0000176203" description="Ribosomal RNA small subunit methyltransferase E">
    <location>
        <begin position="1"/>
        <end position="244"/>
    </location>
</feature>
<feature type="region of interest" description="Disordered" evidence="2">
    <location>
        <begin position="1"/>
        <end position="21"/>
    </location>
</feature>
<sequence length="244" mass="26740">MRIPRIFHPDTLTPQGGETDLSEDAANHVGRVLRMSAGQALQLFDGSNQVFDAEIVQAGKKNVRVRYAAGQTENRESPLHLHLGQVMSRGEKMEFTIQKSIELGVNVITPLLSERCGVKLDGERLEKKIAQWQKIAIAACEQCGRNRVPEIRPVQTLESWCAEPDNGLKLNLHPRAAHSINTLPLPVSRIRLLIGPEGGLSADEIAMTATQGFTDILLGPRVLRTETTALTAITALQVRFGDLG</sequence>
<evidence type="ECO:0000250" key="1"/>
<evidence type="ECO:0000256" key="2">
    <source>
        <dbReference type="SAM" id="MobiDB-lite"/>
    </source>
</evidence>
<evidence type="ECO:0000305" key="3"/>
<reference key="1">
    <citation type="journal article" date="2011" name="J. Bacteriol.">
        <title>Genome sequence of the plant-pathogenic bacterium Dickeya dadantii 3937.</title>
        <authorList>
            <person name="Glasner J.D."/>
            <person name="Yang C.H."/>
            <person name="Reverchon S."/>
            <person name="Hugouvieux-Cotte-Pattat N."/>
            <person name="Condemine G."/>
            <person name="Bohin J.P."/>
            <person name="Van Gijsegem F."/>
            <person name="Yang S."/>
            <person name="Franza T."/>
            <person name="Expert D."/>
            <person name="Plunkett G. III"/>
            <person name="San Francisco M.J."/>
            <person name="Charkowski A.O."/>
            <person name="Py B."/>
            <person name="Bell K."/>
            <person name="Rauscher L."/>
            <person name="Rodriguez-Palenzuela P."/>
            <person name="Toussaint A."/>
            <person name="Holeva M.C."/>
            <person name="He S.Y."/>
            <person name="Douet V."/>
            <person name="Boccara M."/>
            <person name="Blanco C."/>
            <person name="Toth I."/>
            <person name="Anderson B.D."/>
            <person name="Biehl B.S."/>
            <person name="Mau B."/>
            <person name="Flynn S.M."/>
            <person name="Barras F."/>
            <person name="Lindeberg M."/>
            <person name="Birch P.R."/>
            <person name="Tsuyumu S."/>
            <person name="Shi X."/>
            <person name="Hibbing M."/>
            <person name="Yap M.N."/>
            <person name="Carpentier M."/>
            <person name="Dassa E."/>
            <person name="Umehara M."/>
            <person name="Kim J.F."/>
            <person name="Rusch M."/>
            <person name="Soni P."/>
            <person name="Mayhew G.F."/>
            <person name="Fouts D.E."/>
            <person name="Gill S.R."/>
            <person name="Blattner F.R."/>
            <person name="Keen N.T."/>
            <person name="Perna N.T."/>
        </authorList>
    </citation>
    <scope>NUCLEOTIDE SEQUENCE [LARGE SCALE GENOMIC DNA]</scope>
    <source>
        <strain>3937</strain>
    </source>
</reference>
<reference key="2">
    <citation type="journal article" date="1993" name="Mol. Microbiol.">
        <title>Characterization of the nucM gene coding for a nuclease of the phytopathogenic bacteria Erwinia chrysanthemi.</title>
        <authorList>
            <person name="Moulard M."/>
            <person name="Condemine G."/>
            <person name="Robert-Baudouy J."/>
        </authorList>
    </citation>
    <scope>NUCLEOTIDE SEQUENCE [GENOMIC DNA] OF 1-93</scope>
    <source>
        <strain>3937</strain>
    </source>
</reference>
<organism>
    <name type="scientific">Dickeya dadantii (strain 3937)</name>
    <name type="common">Erwinia chrysanthemi (strain 3937)</name>
    <dbReference type="NCBI Taxonomy" id="198628"/>
    <lineage>
        <taxon>Bacteria</taxon>
        <taxon>Pseudomonadati</taxon>
        <taxon>Pseudomonadota</taxon>
        <taxon>Gammaproteobacteria</taxon>
        <taxon>Enterobacterales</taxon>
        <taxon>Pectobacteriaceae</taxon>
        <taxon>Dickeya</taxon>
    </lineage>
</organism>